<dbReference type="EC" id="1.17.7.1" evidence="1"/>
<dbReference type="EMBL" id="BX548174">
    <property type="protein sequence ID" value="CAE19135.1"/>
    <property type="molecule type" value="Genomic_DNA"/>
</dbReference>
<dbReference type="RefSeq" id="WP_011132310.1">
    <property type="nucleotide sequence ID" value="NC_005072.1"/>
</dbReference>
<dbReference type="SMR" id="Q7V215"/>
<dbReference type="STRING" id="59919.PMM0676"/>
<dbReference type="KEGG" id="pmm:PMM0676"/>
<dbReference type="eggNOG" id="COG0821">
    <property type="taxonomic scope" value="Bacteria"/>
</dbReference>
<dbReference type="HOGENOM" id="CLU_042258_0_0_3"/>
<dbReference type="OrthoDB" id="9803214at2"/>
<dbReference type="UniPathway" id="UPA00056">
    <property type="reaction ID" value="UER00096"/>
</dbReference>
<dbReference type="Proteomes" id="UP000001026">
    <property type="component" value="Chromosome"/>
</dbReference>
<dbReference type="GO" id="GO:0051539">
    <property type="term" value="F:4 iron, 4 sulfur cluster binding"/>
    <property type="evidence" value="ECO:0007669"/>
    <property type="project" value="UniProtKB-UniRule"/>
</dbReference>
<dbReference type="GO" id="GO:0046429">
    <property type="term" value="F:4-hydroxy-3-methylbut-2-en-1-yl diphosphate synthase activity (ferredoxin)"/>
    <property type="evidence" value="ECO:0007669"/>
    <property type="project" value="UniProtKB-UniRule"/>
</dbReference>
<dbReference type="GO" id="GO:0005506">
    <property type="term" value="F:iron ion binding"/>
    <property type="evidence" value="ECO:0007669"/>
    <property type="project" value="InterPro"/>
</dbReference>
<dbReference type="GO" id="GO:0019288">
    <property type="term" value="P:isopentenyl diphosphate biosynthetic process, methylerythritol 4-phosphate pathway"/>
    <property type="evidence" value="ECO:0007669"/>
    <property type="project" value="UniProtKB-UniRule"/>
</dbReference>
<dbReference type="GO" id="GO:0016114">
    <property type="term" value="P:terpenoid biosynthetic process"/>
    <property type="evidence" value="ECO:0007669"/>
    <property type="project" value="InterPro"/>
</dbReference>
<dbReference type="FunFam" id="3.20.20.20:FF:000005">
    <property type="entry name" value="4-hydroxy-3-methylbut-2-en-1-yl diphosphate synthase (flavodoxin)"/>
    <property type="match status" value="1"/>
</dbReference>
<dbReference type="Gene3D" id="3.20.20.20">
    <property type="entry name" value="Dihydropteroate synthase-like"/>
    <property type="match status" value="1"/>
</dbReference>
<dbReference type="Gene3D" id="3.30.413.10">
    <property type="entry name" value="Sulfite Reductase Hemoprotein, domain 1"/>
    <property type="match status" value="1"/>
</dbReference>
<dbReference type="HAMAP" id="MF_00159">
    <property type="entry name" value="IspG"/>
    <property type="match status" value="1"/>
</dbReference>
<dbReference type="InterPro" id="IPR011005">
    <property type="entry name" value="Dihydropteroate_synth-like_sf"/>
</dbReference>
<dbReference type="InterPro" id="IPR016425">
    <property type="entry name" value="IspG_bac"/>
</dbReference>
<dbReference type="InterPro" id="IPR004588">
    <property type="entry name" value="IspG_bac-typ"/>
</dbReference>
<dbReference type="InterPro" id="IPR045854">
    <property type="entry name" value="NO2/SO3_Rdtase_4Fe4S_sf"/>
</dbReference>
<dbReference type="NCBIfam" id="TIGR00612">
    <property type="entry name" value="ispG_gcpE"/>
    <property type="match status" value="1"/>
</dbReference>
<dbReference type="NCBIfam" id="NF001540">
    <property type="entry name" value="PRK00366.1"/>
    <property type="match status" value="1"/>
</dbReference>
<dbReference type="PANTHER" id="PTHR30454">
    <property type="entry name" value="4-HYDROXY-3-METHYLBUT-2-EN-1-YL DIPHOSPHATE SYNTHASE"/>
    <property type="match status" value="1"/>
</dbReference>
<dbReference type="PANTHER" id="PTHR30454:SF0">
    <property type="entry name" value="4-HYDROXY-3-METHYLBUT-2-EN-1-YL DIPHOSPHATE SYNTHASE (FERREDOXIN), CHLOROPLASTIC"/>
    <property type="match status" value="1"/>
</dbReference>
<dbReference type="Pfam" id="PF04551">
    <property type="entry name" value="GcpE"/>
    <property type="match status" value="1"/>
</dbReference>
<dbReference type="PIRSF" id="PIRSF004640">
    <property type="entry name" value="IspG"/>
    <property type="match status" value="1"/>
</dbReference>
<dbReference type="SUPFAM" id="SSF56014">
    <property type="entry name" value="Nitrite and sulphite reductase 4Fe-4S domain-like"/>
    <property type="match status" value="1"/>
</dbReference>
<evidence type="ECO:0000255" key="1">
    <source>
        <dbReference type="HAMAP-Rule" id="MF_00159"/>
    </source>
</evidence>
<protein>
    <recommendedName>
        <fullName evidence="1">4-hydroxy-3-methylbut-2-en-1-yl diphosphate synthase (ferredoxin)</fullName>
        <ecNumber evidence="1">1.17.7.1</ecNumber>
    </recommendedName>
    <alternativeName>
        <fullName evidence="1">1-hydroxy-2-methyl-2-(E)-butenyl 4-diphosphate synthase</fullName>
    </alternativeName>
</protein>
<accession>Q7V215</accession>
<reference key="1">
    <citation type="journal article" date="2003" name="Nature">
        <title>Genome divergence in two Prochlorococcus ecotypes reflects oceanic niche differentiation.</title>
        <authorList>
            <person name="Rocap G."/>
            <person name="Larimer F.W."/>
            <person name="Lamerdin J.E."/>
            <person name="Malfatti S."/>
            <person name="Chain P."/>
            <person name="Ahlgren N.A."/>
            <person name="Arellano A."/>
            <person name="Coleman M."/>
            <person name="Hauser L."/>
            <person name="Hess W.R."/>
            <person name="Johnson Z.I."/>
            <person name="Land M.L."/>
            <person name="Lindell D."/>
            <person name="Post A.F."/>
            <person name="Regala W."/>
            <person name="Shah M."/>
            <person name="Shaw S.L."/>
            <person name="Steglich C."/>
            <person name="Sullivan M.B."/>
            <person name="Ting C.S."/>
            <person name="Tolonen A."/>
            <person name="Webb E.A."/>
            <person name="Zinser E.R."/>
            <person name="Chisholm S.W."/>
        </authorList>
    </citation>
    <scope>NUCLEOTIDE SEQUENCE [LARGE SCALE GENOMIC DNA]</scope>
    <source>
        <strain>CCMP1986 / NIES-2087 / MED4</strain>
    </source>
</reference>
<sequence length="405" mass="45023">MSLTQSKEVNSLSRRYSTYIERRITRTVMVGDIAIGSDYPVRVQSMINEDTMDVDNSYLAIKRLHEVGCEIVRLTVPSLAHAKAVGDIKEKLIKNNIDTPLVADVHHNGMKIAMEVAKHVDKVRINPGLFVFEKSDPTRTEYTDTEFETIKKTILKRFTPLVEVLKSENKALRIGVNHGSLSERMLFTYGDTPLGMTESAMEFVKICDELDFHNIIISMKASRAPVMLAAYRMIADRLDAEGYNYPLHLGVTEAGDGDYGRIKSTAGIGTLLAEGLGDTIRVSLTEAPEKEIPVCYSILQSLGLRKTMVEYISCPSCGRTLFNLEEVVDKVRKATSHLTGLDIAIMGCIVNGPGEMADADYGYVGKGKGTIALYRRKEEIKRVPEDEGVDALIRLIKDDGKWIDP</sequence>
<comment type="function">
    <text evidence="1">Converts 2C-methyl-D-erythritol 2,4-cyclodiphosphate (ME-2,4cPP) into 1-hydroxy-2-methyl-2-(E)-butenyl 4-diphosphate.</text>
</comment>
<comment type="catalytic activity">
    <reaction evidence="1">
        <text>(2E)-4-hydroxy-3-methylbut-2-enyl diphosphate + 2 oxidized [2Fe-2S]-[ferredoxin] + H2O = 2-C-methyl-D-erythritol 2,4-cyclic diphosphate + 2 reduced [2Fe-2S]-[ferredoxin] + H(+)</text>
        <dbReference type="Rhea" id="RHEA:26119"/>
        <dbReference type="Rhea" id="RHEA-COMP:10000"/>
        <dbReference type="Rhea" id="RHEA-COMP:10001"/>
        <dbReference type="ChEBI" id="CHEBI:15377"/>
        <dbReference type="ChEBI" id="CHEBI:15378"/>
        <dbReference type="ChEBI" id="CHEBI:33737"/>
        <dbReference type="ChEBI" id="CHEBI:33738"/>
        <dbReference type="ChEBI" id="CHEBI:58483"/>
        <dbReference type="ChEBI" id="CHEBI:128753"/>
        <dbReference type="EC" id="1.17.7.1"/>
    </reaction>
</comment>
<comment type="cofactor">
    <cofactor evidence="1">
        <name>[4Fe-4S] cluster</name>
        <dbReference type="ChEBI" id="CHEBI:49883"/>
    </cofactor>
    <text evidence="1">Binds 1 [4Fe-4S] cluster.</text>
</comment>
<comment type="pathway">
    <text evidence="1">Isoprenoid biosynthesis; isopentenyl diphosphate biosynthesis via DXP pathway; isopentenyl diphosphate from 1-deoxy-D-xylulose 5-phosphate: step 5/6.</text>
</comment>
<comment type="similarity">
    <text evidence="1">Belongs to the IspG family.</text>
</comment>
<name>ISPG_PROMP</name>
<feature type="chain" id="PRO_0000190616" description="4-hydroxy-3-methylbut-2-en-1-yl diphosphate synthase (ferredoxin)">
    <location>
        <begin position="1"/>
        <end position="405"/>
    </location>
</feature>
<feature type="binding site" evidence="1">
    <location>
        <position position="314"/>
    </location>
    <ligand>
        <name>[4Fe-4S] cluster</name>
        <dbReference type="ChEBI" id="CHEBI:49883"/>
    </ligand>
</feature>
<feature type="binding site" evidence="1">
    <location>
        <position position="317"/>
    </location>
    <ligand>
        <name>[4Fe-4S] cluster</name>
        <dbReference type="ChEBI" id="CHEBI:49883"/>
    </ligand>
</feature>
<feature type="binding site" evidence="1">
    <location>
        <position position="348"/>
    </location>
    <ligand>
        <name>[4Fe-4S] cluster</name>
        <dbReference type="ChEBI" id="CHEBI:49883"/>
    </ligand>
</feature>
<feature type="binding site" evidence="1">
    <location>
        <position position="355"/>
    </location>
    <ligand>
        <name>[4Fe-4S] cluster</name>
        <dbReference type="ChEBI" id="CHEBI:49883"/>
    </ligand>
</feature>
<organism>
    <name type="scientific">Prochlorococcus marinus subsp. pastoris (strain CCMP1986 / NIES-2087 / MED4)</name>
    <dbReference type="NCBI Taxonomy" id="59919"/>
    <lineage>
        <taxon>Bacteria</taxon>
        <taxon>Bacillati</taxon>
        <taxon>Cyanobacteriota</taxon>
        <taxon>Cyanophyceae</taxon>
        <taxon>Synechococcales</taxon>
        <taxon>Prochlorococcaceae</taxon>
        <taxon>Prochlorococcus</taxon>
    </lineage>
</organism>
<gene>
    <name evidence="1" type="primary">ispG</name>
    <name type="synonym">gcpE</name>
    <name type="ordered locus">PMM0676</name>
</gene>
<proteinExistence type="inferred from homology"/>
<keyword id="KW-0004">4Fe-4S</keyword>
<keyword id="KW-0408">Iron</keyword>
<keyword id="KW-0411">Iron-sulfur</keyword>
<keyword id="KW-0414">Isoprene biosynthesis</keyword>
<keyword id="KW-0479">Metal-binding</keyword>
<keyword id="KW-0560">Oxidoreductase</keyword>